<reference key="1">
    <citation type="journal article" date="2000" name="Cell">
        <title>The deaf jerker mouse has a mutation in the gene encoding the espin actin-bundling proteins of hair cell stereocilia and lacks espins.</title>
        <authorList>
            <person name="Zheng L."/>
            <person name="Sekerkova G."/>
            <person name="Vranich K."/>
            <person name="Tilney L.G."/>
            <person name="Mugnaini E."/>
            <person name="Bartles J.R."/>
        </authorList>
    </citation>
    <scope>NUCLEOTIDE SEQUENCE [MRNA] (ISOFORM 1)</scope>
    <scope>TISSUE SPECIFICITY</scope>
    <source>
        <tissue>Testis</tissue>
    </source>
</reference>
<reference key="2">
    <citation type="journal article" date="2003" name="J. Neurosci.">
        <title>Novel espin actin-bundling proteins are localized to Purkinje cell dendritic spines and bind the Src homology 3 adapter protein insulin receptor substrate p53.</title>
        <authorList>
            <person name="Sekerkova G."/>
            <person name="Loomis P.A."/>
            <person name="Changyaleket B."/>
            <person name="Zheng L."/>
            <person name="Eytan R."/>
            <person name="Chen B."/>
            <person name="Mugnaini E."/>
            <person name="Bartles J.R."/>
        </authorList>
    </citation>
    <scope>NUCLEOTIDE SEQUENCE [MRNA] (ISOFORMS 2; 3; 4 AND 5)</scope>
    <scope>TISSUE SPECIFICITY</scope>
    <scope>SUBCELLULAR LOCATION</scope>
    <scope>INTERACTION WITH BAIAP2</scope>
    <source>
        <strain>CBA/CaJ</strain>
        <tissue>Cerebellum</tissue>
    </source>
</reference>
<reference key="3">
    <citation type="journal article" date="2004" name="J. Neurosci.">
        <title>Espins are multifunctional actin cytoskeletal regulatory proteins in the microvilli of chemosensory and mechanosensory cells.</title>
        <authorList>
            <person name="Sekerkova G."/>
            <person name="Zheng L."/>
            <person name="Loomis P.A."/>
            <person name="Changyaleket B."/>
            <person name="Whitlon D.S."/>
            <person name="Mugnaini E."/>
            <person name="Bartles J.R."/>
        </authorList>
    </citation>
    <scope>NUCLEOTIDE SEQUENCE [MRNA] (ISOFORMS 6 AND 7)</scope>
    <scope>FUNCTION</scope>
    <scope>INTERACTION WITH PFN2</scope>
    <scope>SUBCELLULAR LOCATION</scope>
    <scope>TISSUE SPECIFICITY</scope>
    <source>
        <strain>CD-1</strain>
    </source>
</reference>
<reference key="4">
    <citation type="journal article" date="1999" name="Mol. Biol. Cell">
        <title>Espin contains an additional actin-binding site in its N terminus and is a major actin-bundling protein of the Sertoli cell-spermatid ectoplasmic specialization junctional plaque.</title>
        <authorList>
            <person name="Chen B."/>
            <person name="Li A."/>
            <person name="Wang D."/>
            <person name="Wang M."/>
            <person name="Zheng L."/>
            <person name="Bartles J.R."/>
        </authorList>
    </citation>
    <scope>NUCLEOTIDE SEQUENCE [GENOMIC DNA] (ISOFORM 8)</scope>
    <scope>SUBUNIT</scope>
    <source>
        <strain>129/SvJ</strain>
    </source>
</reference>
<reference key="5">
    <citation type="journal article" date="2009" name="PLoS Biol.">
        <title>Lineage-specific biology revealed by a finished genome assembly of the mouse.</title>
        <authorList>
            <person name="Church D.M."/>
            <person name="Goodstadt L."/>
            <person name="Hillier L.W."/>
            <person name="Zody M.C."/>
            <person name="Goldstein S."/>
            <person name="She X."/>
            <person name="Bult C.J."/>
            <person name="Agarwala R."/>
            <person name="Cherry J.L."/>
            <person name="DiCuccio M."/>
            <person name="Hlavina W."/>
            <person name="Kapustin Y."/>
            <person name="Meric P."/>
            <person name="Maglott D."/>
            <person name="Birtle Z."/>
            <person name="Marques A.C."/>
            <person name="Graves T."/>
            <person name="Zhou S."/>
            <person name="Teague B."/>
            <person name="Potamousis K."/>
            <person name="Churas C."/>
            <person name="Place M."/>
            <person name="Herschleb J."/>
            <person name="Runnheim R."/>
            <person name="Forrest D."/>
            <person name="Amos-Landgraf J."/>
            <person name="Schwartz D.C."/>
            <person name="Cheng Z."/>
            <person name="Lindblad-Toh K."/>
            <person name="Eichler E.E."/>
            <person name="Ponting C.P."/>
        </authorList>
    </citation>
    <scope>NUCLEOTIDE SEQUENCE [LARGE SCALE GENOMIC DNA]</scope>
    <source>
        <strain>C57BL/6J</strain>
    </source>
</reference>
<reference key="6">
    <citation type="journal article" date="2003" name="J. Cell Biol.">
        <title>Espin cross-links cause the elongation of microvillus-type parallel actin bundles in vivo.</title>
        <authorList>
            <person name="Loomis P.A."/>
            <person name="Zheng L."/>
            <person name="Sekerkova G."/>
            <person name="Changyaleket B."/>
            <person name="Mugnaini E."/>
            <person name="Bartles J.R."/>
        </authorList>
    </citation>
    <scope>FUNCTION</scope>
</reference>
<reference key="7">
    <citation type="journal article" date="2006" name="J. Cell Sci.">
        <title>Targeted wild-type and jerker espins reveal a novel, WH2-domain-dependent way to make actin bundles in cells.</title>
        <authorList>
            <person name="Loomis P.A."/>
            <person name="Kelly A.E."/>
            <person name="Zheng L."/>
            <person name="Changyaleket B."/>
            <person name="Sekerkova G."/>
            <person name="Mugnaini E."/>
            <person name="Ferreira A."/>
            <person name="Mullins R.D."/>
            <person name="Bartles J.R."/>
        </authorList>
    </citation>
    <scope>DOMAIN</scope>
</reference>
<reference key="8">
    <citation type="journal article" date="2009" name="Nat. Cell Biol.">
        <title>Myosin IIIa boosts elongation of stereocilia by transporting espin 1 to the plus ends of actin filaments.</title>
        <authorList>
            <person name="Salles F.T."/>
            <person name="Merritt R.C. Jr."/>
            <person name="Manor U."/>
            <person name="Dougherty G.W."/>
            <person name="Sousa A.D."/>
            <person name="Moore J.E."/>
            <person name="Yengo C.M."/>
            <person name="Dose A.C."/>
            <person name="Kachar B."/>
        </authorList>
    </citation>
    <scope>FUNCTION</scope>
</reference>
<reference key="9">
    <citation type="journal article" date="2010" name="Cell">
        <title>A tissue-specific atlas of mouse protein phosphorylation and expression.</title>
        <authorList>
            <person name="Huttlin E.L."/>
            <person name="Jedrychowski M.P."/>
            <person name="Elias J.E."/>
            <person name="Goswami T."/>
            <person name="Rad R."/>
            <person name="Beausoleil S.A."/>
            <person name="Villen J."/>
            <person name="Haas W."/>
            <person name="Sowa M.E."/>
            <person name="Gygi S.P."/>
        </authorList>
    </citation>
    <scope>PHOSPHORYLATION [LARGE SCALE ANALYSIS] AT SER-342; SER-665; SER-704 AND SER-708</scope>
    <scope>IDENTIFICATION BY MASS SPECTROMETRY [LARGE SCALE ANALYSIS]</scope>
    <source>
        <tissue>Testis</tissue>
    </source>
</reference>
<reference key="10">
    <citation type="journal article" date="2011" name="PLoS Genet.">
        <title>Roles of the espin actin-bundling proteins in the morphogenesis and stabilization of hair cell stereocilia revealed in CBA/CaJ congenic jerker mice.</title>
        <authorList>
            <person name="Sekerkova G."/>
            <person name="Richter C.P."/>
            <person name="Bartles J.R."/>
        </authorList>
    </citation>
    <scope>FUNCTION</scope>
</reference>
<reference key="11">
    <citation type="journal article" date="2012" name="Curr. Biol.">
        <title>Myosin IIIB uses an actin-binding motif in its espin-1 cargo to reach the tips of actin protrusions.</title>
        <authorList>
            <person name="Merritt R.C."/>
            <person name="Manor U."/>
            <person name="Salles F.T."/>
            <person name="Grati M."/>
            <person name="Dose A.C."/>
            <person name="Unrath W.C."/>
            <person name="Quintero O.A."/>
            <person name="Yengo C.M."/>
            <person name="Kachar B."/>
        </authorList>
    </citation>
    <scope>FUNCTION</scope>
</reference>
<reference key="12">
    <citation type="journal article" date="2016" name="J. Cell Biol.">
        <title>Class III myosins shape the auditory hair bundles by limiting microvilli and stereocilia growth.</title>
        <authorList>
            <person name="Lelli A."/>
            <person name="Michel V."/>
            <person name="Boutet de Monvel J."/>
            <person name="Cortese M."/>
            <person name="Bosch-Grau M."/>
            <person name="Aghaie A."/>
            <person name="Perfettini I."/>
            <person name="Dupont T."/>
            <person name="Avan P."/>
            <person name="El-Amraoui A."/>
            <person name="Petit C."/>
        </authorList>
    </citation>
    <scope>SUBCELLULAR LOCATION</scope>
</reference>
<reference key="13">
    <citation type="journal article" date="2016" name="Nat. Commun.">
        <title>Stereocilia-staircase spacing is influenced by myosin III motors and their cargos espin-1 and espin-like.</title>
        <authorList>
            <person name="Ebrahim S."/>
            <person name="Avenarius M.R."/>
            <person name="Grati M."/>
            <person name="Krey J.F."/>
            <person name="Windsor A.M."/>
            <person name="Sousa A.D."/>
            <person name="Ballesteros A."/>
            <person name="Cui R."/>
            <person name="Millis B.A."/>
            <person name="Salles F.T."/>
            <person name="Baird M.A."/>
            <person name="Davidson M.W."/>
            <person name="Jones S.M."/>
            <person name="Choi D."/>
            <person name="Dong L."/>
            <person name="Raval M.H."/>
            <person name="Yengo C.M."/>
            <person name="Barr-Gillespie P.G."/>
            <person name="Kachar B."/>
        </authorList>
    </citation>
    <scope>FUNCTION</scope>
    <scope>INTERACTION WITH MYO3A AND MYO3B</scope>
    <scope>TISSUE SPECIFICITY</scope>
</reference>
<reference key="14">
    <citation type="journal article" date="2016" name="Elife">
        <title>Myosin III-mediated cross-linking and stimulation of actin bundling activity of Espin.</title>
        <authorList>
            <person name="Liu H."/>
            <person name="Li J."/>
            <person name="Raval M.H."/>
            <person name="Yao N."/>
            <person name="Deng X."/>
            <person name="Lu Q."/>
            <person name="Nie S."/>
            <person name="Feng W."/>
            <person name="Wan J."/>
            <person name="Yengo C.M."/>
            <person name="Liu W."/>
            <person name="Zhang M."/>
        </authorList>
    </citation>
    <scope>X-RAY CRYSTALLOGRAPHY (1.65 ANGSTROMS) OF 1-352</scope>
    <scope>INTERACTION WITH MYO3B</scope>
</reference>
<comment type="function">
    <text evidence="8 9 11 12 13 16">Multifunctional actin-bundling protein. Plays a major role in regulating the organization, dimension, dynamics and signaling capacities of the actin filament-rich microvilli in the mechanosensory and chemosensory cells (PubMed:14657236, PubMed:15190118). Required for the assembly and stabilization of the stereociliary parallel actin bundles. Plays a crucial role in the formation and maintenance of inner ear hair cell stereocilia (PubMed:21455486). Involved in the elongation of actin in stereocilia (PubMed:19287378, PubMed:22264607). In extrastriolar hair cells, required for targeting MYO3B to stereocilia tips, and for regulation of stereocilia diameter and staircase formation (PubMed:26926603).</text>
</comment>
<comment type="subunit">
    <text evidence="5 7 9 15 16 19">Monomer (Probable). Binds F-actin in a Ca(2+)-resistant fashion (PubMed:10588661). Interacts (via N-terminus) with BAIAP2 (via SH3-domain) (PubMed:12598619). Interacts with PFN2 (PubMed:15190118). Interacts with MYO3A (via C-terminus) (PubMed:26926603). Interacts with MYO3B (via C-terminus) (PubMed:26785147, PubMed:26926603).</text>
</comment>
<comment type="subcellular location">
    <subcellularLocation>
        <location>Cytoplasm</location>
        <location>Cytoskeleton</location>
    </subcellularLocation>
    <subcellularLocation>
        <location evidence="14">Cell projection</location>
        <location evidence="14">Stereocilium</location>
    </subcellularLocation>
    <subcellularLocation>
        <location>Cell projection</location>
        <location>Microvillus</location>
    </subcellularLocation>
    <subcellularLocation>
        <location>Cell junction</location>
    </subcellularLocation>
</comment>
<comment type="subcellular location">
    <molecule>Isoform 2</molecule>
    <subcellularLocation>
        <location>Cytoplasm</location>
        <location>Cytoskeleton</location>
    </subcellularLocation>
    <subcellularLocation>
        <location>Cell projection</location>
        <location>Dendritic spine</location>
    </subcellularLocation>
</comment>
<comment type="subcellular location">
    <molecule>Isoform 3</molecule>
    <subcellularLocation>
        <location>Cytoplasm</location>
        <location>Cytoskeleton</location>
    </subcellularLocation>
    <subcellularLocation>
        <location>Cell projection</location>
        <location>Dendritic spine</location>
    </subcellularLocation>
</comment>
<comment type="subcellular location">
    <molecule>Isoform 4</molecule>
    <subcellularLocation>
        <location>Cytoplasm</location>
        <location>Cytoskeleton</location>
    </subcellularLocation>
    <subcellularLocation>
        <location>Cell projection</location>
        <location>Dendritic spine</location>
    </subcellularLocation>
</comment>
<comment type="subcellular location">
    <molecule>Isoform 5</molecule>
    <subcellularLocation>
        <location>Cytoplasm</location>
        <location>Cytoskeleton</location>
    </subcellularLocation>
    <subcellularLocation>
        <location>Cell projection</location>
        <location>Dendritic spine</location>
    </subcellularLocation>
</comment>
<comment type="subcellular location">
    <molecule>Isoform 8</molecule>
    <subcellularLocation>
        <location>Cytoplasm</location>
        <location>Cytoskeleton</location>
    </subcellularLocation>
    <subcellularLocation>
        <location>Cell junction</location>
    </subcellularLocation>
    <text>Isoform 8 localizes to parallel actin bundles of ectoplasmic specializations between neighboring Sertoli cells and at sites where Sertoli cells contact the heads of elongate spermatids.</text>
</comment>
<comment type="alternative products">
    <event type="alternative splicing"/>
    <isoform>
        <id>Q9ET47-1</id>
        <name>1</name>
        <sequence type="displayed"/>
    </isoform>
    <isoform>
        <id>Q9ET47-2</id>
        <name>2</name>
        <name>Purkinje cell espin isoform 1</name>
        <sequence type="described" ref="VSP_033733 VSP_033734 VSP_033736 VSP_033739"/>
    </isoform>
    <isoform>
        <id>Q9ET47-3</id>
        <name>3</name>
        <name>Purkinje cell espin isoform 1+</name>
        <sequence type="described" ref="VSP_033733 VSP_033734 VSP_033736"/>
    </isoform>
    <isoform>
        <id>Q9ET47-4</id>
        <name>4</name>
        <name>Purkinje cell espin isoform 2+</name>
        <sequence type="described" ref="VSP_033733 VSP_033734 VSP_033735"/>
    </isoform>
    <isoform>
        <id>Q9ET47-5</id>
        <name>5</name>
        <name>Purkinje cell espin isoform 2</name>
        <sequence type="described" ref="VSP_033733 VSP_033734 VSP_033735 VSP_033739"/>
    </isoform>
    <isoform>
        <id>Q9ET47-6</id>
        <name>6</name>
        <name>3B</name>
        <sequence type="described" ref="VSP_033732 VSP_033737 VSP_033739"/>
    </isoform>
    <isoform>
        <id>Q9ET47-7</id>
        <name>7</name>
        <name>3A</name>
        <sequence type="described" ref="VSP_033731 VSP_033739"/>
    </isoform>
    <isoform>
        <id>Q9ET47-8</id>
        <name>8</name>
        <name>small</name>
        <sequence type="described" ref="VSP_033730 VSP_033738 VSP_033740"/>
    </isoform>
</comment>
<comment type="tissue specificity">
    <text evidence="6 7 9 16">Expressed at high concentration in the microvillar parallel actin bundle (PAB) of hair cells stereocilia in the cochlea and vestibular system. Detected also at high levels of a number of other sensory cell types, including taste receptor cells, solitary chemoreceptor cells, vomeronasal sensory neurons and Merkel cells. Isoforms 2, 3, 4 and 5 are expressed in Purkinje cells dendritic spines. Expressed in utricle hair bundles (at protein level) (PubMed:26926603).</text>
</comment>
<comment type="domain">
    <text evidence="10">The WH2-domain binds actin monomer and mediates actin bundle assembly.</text>
</comment>
<comment type="miscellaneous">
    <text evidence="6">Jerker mice have a frameshift mutation that affect the espin C-terminus. This mutation cause deafness, vestibular dysfunction and hair cell degeneration.</text>
</comment>
<sequence length="871" mass="94497">MALEQALQAARRGDLDVLRSLHAAGLLGPSLRDSLDALPVHHAARSGKLHCLRYLVEEVALPAVSRARNGATPAHDAAATGYLSCLQWLLTQGGCRVQEKDNSGATVLHLAARFGHPDVVKWLLYQGGANSAITTDTGALPIHYAAAKGDLPSLKLLVGHYPEGVNAQTNNGATPLYLACQEGHLEVTKYLVQECSADPHLRAQDGMTPLHAAAQMGHNPVLVWLVSFADVSFSEQDHDGATAMHFAASRGHTKVLSWLLLHGAEISQDLWGGTPLHDAAENGELECCQILAVNGAGLDVRDHDGYTAADLAEFNGHTHCSRYLRTVQTLSLEHRVLSRDQSMDLEAKQLDSGMSSPNTTMSVQPMTFDLGSPTSTFSNYDSCSSSHSSSKGQRSNRGIPGARAADLQSYMDMLNPEKSLPRGKLGKPSPPPPPPPPPPSFPPPPPPTGTQPPPPPPGYPAPNPPVGLHLNNIYMQTKNKLRHVEVDSLKEPKVELNDQFAQPSSGDGHSGLHRQDSGLLRQDSELLHRQELLRHSTGLRRQDSDRKQRSFSKQPSTGDYYRQLGRSPGEPLAARPGMAHSEEAALLPGNHVHNGCSADSKASRELPPPPPPPPLPEALSSPPPAPPLPIEGAGAACGQRRSSSSTGKVRVLRHRKSTKSFNMMSPTGDNSELLAEIKAGKSLKPTPQSKGLTTVFSGSGQPASQPESPQPLVSPAPSRTRSPTPPASGSQPLLNGSVVPAPPATPAPGVHLDVEALIPTLDEQGRPIPEWKRQVMVRKLQQKMQEEEEQRRKEEEEEARLASLPAWRRDILRKKLEEEREQKRKEEERQKLEEIQRAKEQSEKLRTLGYDEAKLAPWQRQVILKKGEIPK</sequence>
<dbReference type="EMBL" id="AF239886">
    <property type="protein sequence ID" value="AAF98134.1"/>
    <property type="molecule type" value="mRNA"/>
</dbReference>
<dbReference type="EMBL" id="AF540942">
    <property type="protein sequence ID" value="AAO50326.1"/>
    <property type="molecule type" value="mRNA"/>
</dbReference>
<dbReference type="EMBL" id="AF540943">
    <property type="protein sequence ID" value="AAO50327.1"/>
    <property type="molecule type" value="mRNA"/>
</dbReference>
<dbReference type="EMBL" id="AF540944">
    <property type="protein sequence ID" value="AAO50328.1"/>
    <property type="molecule type" value="mRNA"/>
</dbReference>
<dbReference type="EMBL" id="AF540945">
    <property type="protein sequence ID" value="AAO50329.1"/>
    <property type="molecule type" value="mRNA"/>
</dbReference>
<dbReference type="EMBL" id="AY587570">
    <property type="protein sequence ID" value="AAT46472.1"/>
    <property type="molecule type" value="mRNA"/>
</dbReference>
<dbReference type="EMBL" id="AY587571">
    <property type="protein sequence ID" value="AAT46473.1"/>
    <property type="molecule type" value="mRNA"/>
</dbReference>
<dbReference type="EMBL" id="AF134858">
    <property type="protein sequence ID" value="AAF18322.1"/>
    <property type="molecule type" value="Genomic_DNA"/>
</dbReference>
<dbReference type="EMBL" id="AL772240">
    <property type="status" value="NOT_ANNOTATED_CDS"/>
    <property type="molecule type" value="Genomic_DNA"/>
</dbReference>
<dbReference type="CCDS" id="CCDS18989.1">
    <molecule id="Q9ET47-1"/>
</dbReference>
<dbReference type="CCDS" id="CCDS18990.1">
    <molecule id="Q9ET47-3"/>
</dbReference>
<dbReference type="CCDS" id="CCDS18991.1">
    <molecule id="Q9ET47-4"/>
</dbReference>
<dbReference type="CCDS" id="CCDS18992.1">
    <molecule id="Q9ET47-5"/>
</dbReference>
<dbReference type="CCDS" id="CCDS18993.1">
    <molecule id="Q9ET47-2"/>
</dbReference>
<dbReference type="CCDS" id="CCDS18994.1">
    <molecule id="Q9ET47-8"/>
</dbReference>
<dbReference type="RefSeq" id="NP_997570.1">
    <molecule id="Q9ET47-1"/>
    <property type="nucleotide sequence ID" value="NM_207687.3"/>
</dbReference>
<dbReference type="RefSeq" id="NP_997571.1">
    <molecule id="Q9ET47-3"/>
    <property type="nucleotide sequence ID" value="NM_207688.2"/>
</dbReference>
<dbReference type="RefSeq" id="NP_997572.1">
    <molecule id="Q9ET47-4"/>
    <property type="nucleotide sequence ID" value="NM_207689.2"/>
</dbReference>
<dbReference type="RefSeq" id="NP_997573.1">
    <molecule id="Q9ET47-5"/>
    <property type="nucleotide sequence ID" value="NM_207690.2"/>
</dbReference>
<dbReference type="RefSeq" id="NP_997574.2">
    <molecule id="Q9ET47-2"/>
    <property type="nucleotide sequence ID" value="NM_207691.2"/>
</dbReference>
<dbReference type="PDB" id="5ET0">
    <property type="method" value="X-ray"/>
    <property type="resolution" value="2.30 A"/>
    <property type="chains" value="A/C=1-352"/>
</dbReference>
<dbReference type="PDB" id="5ET1">
    <property type="method" value="X-ray"/>
    <property type="resolution" value="1.65 A"/>
    <property type="chains" value="A/B=1-352"/>
</dbReference>
<dbReference type="PDBsum" id="5ET0"/>
<dbReference type="PDBsum" id="5ET1"/>
<dbReference type="SMR" id="Q9ET47"/>
<dbReference type="BioGRID" id="207859">
    <property type="interactions" value="8"/>
</dbReference>
<dbReference type="CORUM" id="Q9ET47"/>
<dbReference type="FunCoup" id="Q9ET47">
    <property type="interactions" value="35"/>
</dbReference>
<dbReference type="IntAct" id="Q9ET47">
    <property type="interactions" value="9"/>
</dbReference>
<dbReference type="MINT" id="Q9ET47"/>
<dbReference type="STRING" id="10090.ENSMUSP00000030785"/>
<dbReference type="GlyGen" id="Q9ET47">
    <property type="glycosylation" value="2 sites"/>
</dbReference>
<dbReference type="iPTMnet" id="Q9ET47"/>
<dbReference type="PhosphoSitePlus" id="Q9ET47"/>
<dbReference type="SwissPalm" id="Q9ET47"/>
<dbReference type="PaxDb" id="10090-ENSMUSP00000030785"/>
<dbReference type="ProteomicsDB" id="275545">
    <molecule id="Q9ET47-1"/>
</dbReference>
<dbReference type="ProteomicsDB" id="275546">
    <molecule id="Q9ET47-2"/>
</dbReference>
<dbReference type="ProteomicsDB" id="275547">
    <molecule id="Q9ET47-3"/>
</dbReference>
<dbReference type="ProteomicsDB" id="275548">
    <molecule id="Q9ET47-4"/>
</dbReference>
<dbReference type="ProteomicsDB" id="275549">
    <molecule id="Q9ET47-5"/>
</dbReference>
<dbReference type="ProteomicsDB" id="275550">
    <molecule id="Q9ET47-6"/>
</dbReference>
<dbReference type="ProteomicsDB" id="275551">
    <molecule id="Q9ET47-7"/>
</dbReference>
<dbReference type="ProteomicsDB" id="275552">
    <molecule id="Q9ET47-8"/>
</dbReference>
<dbReference type="ABCD" id="Q9ET47">
    <property type="antibodies" value="22 sequenced antibodies"/>
</dbReference>
<dbReference type="Antibodypedia" id="27332">
    <property type="antibodies" value="85 antibodies from 24 providers"/>
</dbReference>
<dbReference type="Ensembl" id="ENSMUST00000030785.15">
    <molecule id="Q9ET47-1"/>
    <property type="protein sequence ID" value="ENSMUSP00000030785.9"/>
    <property type="gene ID" value="ENSMUSG00000028943.19"/>
</dbReference>
<dbReference type="Ensembl" id="ENSMUST00000070018.14">
    <molecule id="Q9ET47-2"/>
    <property type="protein sequence ID" value="ENSMUSP00000065545.8"/>
    <property type="gene ID" value="ENSMUSG00000028943.19"/>
</dbReference>
<dbReference type="Ensembl" id="ENSMUST00000080042.13">
    <molecule id="Q9ET47-4"/>
    <property type="protein sequence ID" value="ENSMUSP00000078951.7"/>
    <property type="gene ID" value="ENSMUSG00000028943.19"/>
</dbReference>
<dbReference type="Ensembl" id="ENSMUST00000084114.12">
    <molecule id="Q9ET47-3"/>
    <property type="protein sequence ID" value="ENSMUSP00000081131.6"/>
    <property type="gene ID" value="ENSMUSG00000028943.19"/>
</dbReference>
<dbReference type="Ensembl" id="ENSMUST00000105653.8">
    <molecule id="Q9ET47-7"/>
    <property type="protein sequence ID" value="ENSMUSP00000101278.2"/>
    <property type="gene ID" value="ENSMUSG00000028943.19"/>
</dbReference>
<dbReference type="Ensembl" id="ENSMUST00000105657.9">
    <molecule id="Q9ET47-5"/>
    <property type="protein sequence ID" value="ENSMUSP00000101282.3"/>
    <property type="gene ID" value="ENSMUSG00000028943.19"/>
</dbReference>
<dbReference type="GeneID" id="56226"/>
<dbReference type="KEGG" id="mmu:56226"/>
<dbReference type="UCSC" id="uc008vzn.1">
    <molecule id="Q9ET47-6"/>
    <property type="organism name" value="mouse"/>
</dbReference>
<dbReference type="UCSC" id="uc008vzo.1">
    <molecule id="Q9ET47-7"/>
    <property type="organism name" value="mouse"/>
</dbReference>
<dbReference type="UCSC" id="uc008vzp.1">
    <molecule id="Q9ET47-4"/>
    <property type="organism name" value="mouse"/>
</dbReference>
<dbReference type="UCSC" id="uc008vzq.1">
    <molecule id="Q9ET47-3"/>
    <property type="organism name" value="mouse"/>
</dbReference>
<dbReference type="UCSC" id="uc008vzr.1">
    <molecule id="Q9ET47-5"/>
    <property type="organism name" value="mouse"/>
</dbReference>
<dbReference type="UCSC" id="uc008vzs.1">
    <molecule id="Q9ET47-2"/>
    <property type="organism name" value="mouse"/>
</dbReference>
<dbReference type="UCSC" id="uc008vzt.1">
    <molecule id="Q9ET47-1"/>
    <property type="organism name" value="mouse"/>
</dbReference>
<dbReference type="AGR" id="MGI:1861630"/>
<dbReference type="CTD" id="83715"/>
<dbReference type="MGI" id="MGI:1861630">
    <property type="gene designation" value="Espn"/>
</dbReference>
<dbReference type="VEuPathDB" id="HostDB:ENSMUSG00000028943"/>
<dbReference type="eggNOG" id="KOG0504">
    <property type="taxonomic scope" value="Eukaryota"/>
</dbReference>
<dbReference type="GeneTree" id="ENSGT00940000160408"/>
<dbReference type="HOGENOM" id="CLU_543542_0_0_1"/>
<dbReference type="InParanoid" id="Q9ET47"/>
<dbReference type="OrthoDB" id="10261302at2759"/>
<dbReference type="PhylomeDB" id="Q9ET47"/>
<dbReference type="TreeFam" id="TF326392"/>
<dbReference type="BioGRID-ORCS" id="56226">
    <property type="hits" value="5 hits in 79 CRISPR screens"/>
</dbReference>
<dbReference type="CD-CODE" id="01CA17F3">
    <property type="entry name" value="Centrosome"/>
</dbReference>
<dbReference type="ChiTaRS" id="Espn">
    <property type="organism name" value="mouse"/>
</dbReference>
<dbReference type="EvolutionaryTrace" id="Q9ET47"/>
<dbReference type="PRO" id="PR:Q9ET47"/>
<dbReference type="Proteomes" id="UP000000589">
    <property type="component" value="Chromosome 4"/>
</dbReference>
<dbReference type="RNAct" id="Q9ET47">
    <property type="molecule type" value="protein"/>
</dbReference>
<dbReference type="Bgee" id="ENSMUSG00000028943">
    <property type="expression patterns" value="Expressed in interventricular septum and 79 other cell types or tissues"/>
</dbReference>
<dbReference type="ExpressionAtlas" id="Q9ET47">
    <property type="expression patterns" value="baseline and differential"/>
</dbReference>
<dbReference type="GO" id="GO:0015629">
    <property type="term" value="C:actin cytoskeleton"/>
    <property type="evidence" value="ECO:0000314"/>
    <property type="project" value="MGI"/>
</dbReference>
<dbReference type="GO" id="GO:0070161">
    <property type="term" value="C:anchoring junction"/>
    <property type="evidence" value="ECO:0007669"/>
    <property type="project" value="UniProtKB-SubCell"/>
</dbReference>
<dbReference type="GO" id="GO:0061831">
    <property type="term" value="C:apical ectoplasmic specialization"/>
    <property type="evidence" value="ECO:0000314"/>
    <property type="project" value="MGI"/>
</dbReference>
<dbReference type="GO" id="GO:0005903">
    <property type="term" value="C:brush border"/>
    <property type="evidence" value="ECO:0000314"/>
    <property type="project" value="UniProtKB"/>
</dbReference>
<dbReference type="GO" id="GO:0005737">
    <property type="term" value="C:cytoplasm"/>
    <property type="evidence" value="ECO:0000266"/>
    <property type="project" value="MGI"/>
</dbReference>
<dbReference type="GO" id="GO:0005829">
    <property type="term" value="C:cytosol"/>
    <property type="evidence" value="ECO:0000304"/>
    <property type="project" value="Reactome"/>
</dbReference>
<dbReference type="GO" id="GO:0043197">
    <property type="term" value="C:dendritic spine"/>
    <property type="evidence" value="ECO:0007669"/>
    <property type="project" value="UniProtKB-SubCell"/>
</dbReference>
<dbReference type="GO" id="GO:0031941">
    <property type="term" value="C:filamentous actin"/>
    <property type="evidence" value="ECO:0000250"/>
    <property type="project" value="UniProtKB"/>
</dbReference>
<dbReference type="GO" id="GO:0005902">
    <property type="term" value="C:microvillus"/>
    <property type="evidence" value="ECO:0000266"/>
    <property type="project" value="MGI"/>
</dbReference>
<dbReference type="GO" id="GO:0032420">
    <property type="term" value="C:stereocilium"/>
    <property type="evidence" value="ECO:0000314"/>
    <property type="project" value="MGI"/>
</dbReference>
<dbReference type="GO" id="GO:0032421">
    <property type="term" value="C:stereocilium bundle"/>
    <property type="evidence" value="ECO:0000314"/>
    <property type="project" value="MGI"/>
</dbReference>
<dbReference type="GO" id="GO:0032426">
    <property type="term" value="C:stereocilium tip"/>
    <property type="evidence" value="ECO:0000314"/>
    <property type="project" value="UniProtKB"/>
</dbReference>
<dbReference type="GO" id="GO:0051015">
    <property type="term" value="F:actin filament binding"/>
    <property type="evidence" value="ECO:0000250"/>
    <property type="project" value="UniProtKB"/>
</dbReference>
<dbReference type="GO" id="GO:0017124">
    <property type="term" value="F:SH3 domain binding"/>
    <property type="evidence" value="ECO:0000250"/>
    <property type="project" value="UniProtKB"/>
</dbReference>
<dbReference type="GO" id="GO:0051017">
    <property type="term" value="P:actin filament bundle assembly"/>
    <property type="evidence" value="ECO:0000314"/>
    <property type="project" value="MGI"/>
</dbReference>
<dbReference type="GO" id="GO:0051639">
    <property type="term" value="P:actin filament network formation"/>
    <property type="evidence" value="ECO:0000303"/>
    <property type="project" value="UniProtKB"/>
</dbReference>
<dbReference type="GO" id="GO:0007626">
    <property type="term" value="P:locomotory behavior"/>
    <property type="evidence" value="ECO:0000315"/>
    <property type="project" value="MGI"/>
</dbReference>
<dbReference type="GO" id="GO:0051494">
    <property type="term" value="P:negative regulation of cytoskeleton organization"/>
    <property type="evidence" value="ECO:0000314"/>
    <property type="project" value="UniProtKB"/>
</dbReference>
<dbReference type="GO" id="GO:0030046">
    <property type="term" value="P:parallel actin filament bundle assembly"/>
    <property type="evidence" value="ECO:0000314"/>
    <property type="project" value="MGI"/>
</dbReference>
<dbReference type="GO" id="GO:0051491">
    <property type="term" value="P:positive regulation of filopodium assembly"/>
    <property type="evidence" value="ECO:0000316"/>
    <property type="project" value="MGI"/>
</dbReference>
<dbReference type="GO" id="GO:0007605">
    <property type="term" value="P:sensory perception of sound"/>
    <property type="evidence" value="ECO:0007669"/>
    <property type="project" value="UniProtKB-KW"/>
</dbReference>
<dbReference type="FunFam" id="1.25.40.20:FF:000174">
    <property type="entry name" value="Espin"/>
    <property type="match status" value="1"/>
</dbReference>
<dbReference type="Gene3D" id="1.25.40.20">
    <property type="entry name" value="Ankyrin repeat-containing domain"/>
    <property type="match status" value="1"/>
</dbReference>
<dbReference type="InterPro" id="IPR002110">
    <property type="entry name" value="Ankyrin_rpt"/>
</dbReference>
<dbReference type="InterPro" id="IPR036770">
    <property type="entry name" value="Ankyrin_rpt-contain_sf"/>
</dbReference>
<dbReference type="InterPro" id="IPR052420">
    <property type="entry name" value="Espin/Espin-like"/>
</dbReference>
<dbReference type="InterPro" id="IPR003124">
    <property type="entry name" value="WH2_dom"/>
</dbReference>
<dbReference type="PANTHER" id="PTHR24153">
    <property type="entry name" value="ESPIN"/>
    <property type="match status" value="1"/>
</dbReference>
<dbReference type="PANTHER" id="PTHR24153:SF14">
    <property type="entry name" value="ESPIN"/>
    <property type="match status" value="1"/>
</dbReference>
<dbReference type="Pfam" id="PF12796">
    <property type="entry name" value="Ank_2"/>
    <property type="match status" value="3"/>
</dbReference>
<dbReference type="Pfam" id="PF02205">
    <property type="entry name" value="WH2"/>
    <property type="match status" value="1"/>
</dbReference>
<dbReference type="PRINTS" id="PR01217">
    <property type="entry name" value="PRICHEXTENSN"/>
</dbReference>
<dbReference type="SMART" id="SM00248">
    <property type="entry name" value="ANK"/>
    <property type="match status" value="9"/>
</dbReference>
<dbReference type="SMART" id="SM00246">
    <property type="entry name" value="WH2"/>
    <property type="match status" value="1"/>
</dbReference>
<dbReference type="SUPFAM" id="SSF48403">
    <property type="entry name" value="Ankyrin repeat"/>
    <property type="match status" value="1"/>
</dbReference>
<dbReference type="PROSITE" id="PS50297">
    <property type="entry name" value="ANK_REP_REGION"/>
    <property type="match status" value="1"/>
</dbReference>
<dbReference type="PROSITE" id="PS50088">
    <property type="entry name" value="ANK_REPEAT"/>
    <property type="match status" value="6"/>
</dbReference>
<dbReference type="PROSITE" id="PS51082">
    <property type="entry name" value="WH2"/>
    <property type="match status" value="1"/>
</dbReference>
<name>ESPN_MOUSE</name>
<feature type="chain" id="PRO_0000334667" description="Espin">
    <location>
        <begin position="1"/>
        <end position="871"/>
    </location>
</feature>
<feature type="repeat" description="ANK 1">
    <location>
        <begin position="1"/>
        <end position="31"/>
    </location>
</feature>
<feature type="repeat" description="ANK 2">
    <location>
        <begin position="35"/>
        <end position="66"/>
    </location>
</feature>
<feature type="repeat" description="ANK 3">
    <location>
        <begin position="69"/>
        <end position="99"/>
    </location>
</feature>
<feature type="repeat" description="ANK 4">
    <location>
        <begin position="103"/>
        <end position="132"/>
    </location>
</feature>
<feature type="repeat" description="ANK 5">
    <location>
        <begin position="137"/>
        <end position="167"/>
    </location>
</feature>
<feature type="repeat" description="ANK 6">
    <location>
        <begin position="171"/>
        <end position="201"/>
    </location>
</feature>
<feature type="repeat" description="ANK 7">
    <location>
        <begin position="205"/>
        <end position="235"/>
    </location>
</feature>
<feature type="repeat" description="ANK 8">
    <location>
        <begin position="239"/>
        <end position="268"/>
    </location>
</feature>
<feature type="repeat" description="ANK 9">
    <location>
        <begin position="271"/>
        <end position="300"/>
    </location>
</feature>
<feature type="domain" description="WH2" evidence="3">
    <location>
        <begin position="669"/>
        <end position="686"/>
    </location>
</feature>
<feature type="region of interest" description="Disordered" evidence="4">
    <location>
        <begin position="349"/>
        <end position="400"/>
    </location>
</feature>
<feature type="region of interest" description="Disordered" evidence="4">
    <location>
        <begin position="416"/>
        <end position="469"/>
    </location>
</feature>
<feature type="region of interest" description="Disordered" evidence="4">
    <location>
        <begin position="493"/>
        <end position="750"/>
    </location>
</feature>
<feature type="region of interest" description="Disordered" evidence="4">
    <location>
        <begin position="819"/>
        <end position="850"/>
    </location>
</feature>
<feature type="coiled-coil region" evidence="2">
    <location>
        <begin position="772"/>
        <end position="848"/>
    </location>
</feature>
<feature type="compositionally biased region" description="Polar residues" evidence="4">
    <location>
        <begin position="352"/>
        <end position="365"/>
    </location>
</feature>
<feature type="compositionally biased region" description="Low complexity" evidence="4">
    <location>
        <begin position="377"/>
        <end position="395"/>
    </location>
</feature>
<feature type="compositionally biased region" description="Pro residues" evidence="4">
    <location>
        <begin position="428"/>
        <end position="465"/>
    </location>
</feature>
<feature type="compositionally biased region" description="Basic and acidic residues" evidence="4">
    <location>
        <begin position="522"/>
        <end position="548"/>
    </location>
</feature>
<feature type="compositionally biased region" description="Pro residues" evidence="4">
    <location>
        <begin position="606"/>
        <end position="629"/>
    </location>
</feature>
<feature type="compositionally biased region" description="Polar residues" evidence="4">
    <location>
        <begin position="659"/>
        <end position="670"/>
    </location>
</feature>
<feature type="compositionally biased region" description="Polar residues" evidence="4">
    <location>
        <begin position="685"/>
        <end position="707"/>
    </location>
</feature>
<feature type="modified residue" description="Phosphoserine" evidence="1">
    <location>
        <position position="338"/>
    </location>
</feature>
<feature type="modified residue" description="Phosphoserine" evidence="20">
    <location>
        <position position="342"/>
    </location>
</feature>
<feature type="modified residue" description="Phosphoserine" evidence="1">
    <location>
        <position position="517"/>
    </location>
</feature>
<feature type="modified residue" description="Phosphoserine" evidence="1">
    <location>
        <position position="524"/>
    </location>
</feature>
<feature type="modified residue" description="Phosphoserine" evidence="1">
    <location>
        <position position="556"/>
    </location>
</feature>
<feature type="modified residue" description="Phosphoserine" evidence="20">
    <location>
        <position position="665"/>
    </location>
</feature>
<feature type="modified residue" description="Phosphoserine" evidence="20">
    <location>
        <position position="704"/>
    </location>
</feature>
<feature type="modified residue" description="Phosphoserine" evidence="20">
    <location>
        <position position="708"/>
    </location>
</feature>
<feature type="modified residue" description="Phosphoserine" evidence="1">
    <location>
        <position position="714"/>
    </location>
</feature>
<feature type="splice variant" id="VSP_033730" description="In isoform 8." evidence="19">
    <location>
        <begin position="1"/>
        <end position="643"/>
    </location>
</feature>
<feature type="splice variant" id="VSP_033731" description="In isoform 7." evidence="18">
    <location>
        <begin position="1"/>
        <end position="577"/>
    </location>
</feature>
<feature type="splice variant" id="VSP_033732" description="In isoform 6." evidence="18">
    <location>
        <begin position="1"/>
        <end position="547"/>
    </location>
</feature>
<feature type="splice variant" id="VSP_033733" description="In isoform 2, isoform 4, isoform 3 and isoform 5." evidence="17">
    <location>
        <begin position="1"/>
        <end position="327"/>
    </location>
</feature>
<feature type="splice variant" id="VSP_033734" description="In isoform 2, isoform 4, isoform 3 and isoform 5." evidence="17">
    <original>QTL</original>
    <variation>MGN</variation>
    <location>
        <begin position="328"/>
        <end position="330"/>
    </location>
</feature>
<feature type="splice variant" id="VSP_033735" description="In isoform 4 and isoform 5." evidence="17">
    <location>
        <begin position="492"/>
        <end position="583"/>
    </location>
</feature>
<feature type="splice variant" id="VSP_033736" description="In isoform 2 and isoform 3." evidence="17">
    <location>
        <begin position="492"/>
        <end position="502"/>
    </location>
</feature>
<feature type="splice variant" id="VSP_033737" description="In isoform 6." evidence="18">
    <original>QRSFSKQPSTGDYYRQLGRSPGEPLAARPGMAHSEE</original>
    <variation>MAHSEEVRVHQPALAGCSGPSPVPRPSLSGPSAPPQ</variation>
    <location>
        <begin position="548"/>
        <end position="583"/>
    </location>
</feature>
<feature type="splice variant" id="VSP_033738" description="In isoform 8." evidence="19">
    <original>SSTGKVRVLRHRK</original>
    <variation>MNSQGPLGGGRIP</variation>
    <location>
        <begin position="644"/>
        <end position="656"/>
    </location>
</feature>
<feature type="splice variant" id="VSP_033739" description="In isoform 2, isoform 5, isoform 6 and isoform 7." evidence="17 18">
    <location>
        <begin position="648"/>
        <end position="656"/>
    </location>
</feature>
<feature type="splice variant" id="VSP_033740" description="In isoform 8." evidence="19">
    <original>Q</original>
    <variation>QVGTGRVPRPGSQCLPSAQPYCFSRQ</variation>
    <location>
        <position position="705"/>
    </location>
</feature>
<feature type="sequence conflict" description="In Ref. 2; AAO50326/AAO50327 and 1; AAF98134." evidence="19" ref="2 1">
    <original>L</original>
    <variation>M</variation>
    <location>
        <position position="564"/>
    </location>
</feature>
<feature type="sequence conflict" description="In Ref. 4; AAF18322." evidence="19" ref="4">
    <original>T</original>
    <variation>A</variation>
    <location>
        <position position="720"/>
    </location>
</feature>
<feature type="helix" evidence="22">
    <location>
        <begin position="1"/>
        <end position="12"/>
    </location>
</feature>
<feature type="helix" evidence="22">
    <location>
        <begin position="15"/>
        <end position="23"/>
    </location>
</feature>
<feature type="helix" evidence="22">
    <location>
        <begin position="39"/>
        <end position="44"/>
    </location>
</feature>
<feature type="turn" evidence="22">
    <location>
        <begin position="45"/>
        <end position="47"/>
    </location>
</feature>
<feature type="helix" evidence="22">
    <location>
        <begin position="49"/>
        <end position="57"/>
    </location>
</feature>
<feature type="helix" evidence="22">
    <location>
        <begin position="73"/>
        <end position="80"/>
    </location>
</feature>
<feature type="helix" evidence="22">
    <location>
        <begin position="83"/>
        <end position="90"/>
    </location>
</feature>
<feature type="turn" evidence="21">
    <location>
        <begin position="91"/>
        <end position="93"/>
    </location>
</feature>
<feature type="helix" evidence="22">
    <location>
        <begin position="107"/>
        <end position="113"/>
    </location>
</feature>
<feature type="helix" evidence="22">
    <location>
        <begin position="117"/>
        <end position="125"/>
    </location>
</feature>
<feature type="helix" evidence="22">
    <location>
        <begin position="141"/>
        <end position="148"/>
    </location>
</feature>
<feature type="helix" evidence="22">
    <location>
        <begin position="151"/>
        <end position="160"/>
    </location>
</feature>
<feature type="helix" evidence="22">
    <location>
        <begin position="162"/>
        <end position="164"/>
    </location>
</feature>
<feature type="helix" evidence="22">
    <location>
        <begin position="175"/>
        <end position="181"/>
    </location>
</feature>
<feature type="helix" evidence="22">
    <location>
        <begin position="185"/>
        <end position="195"/>
    </location>
</feature>
<feature type="helix" evidence="22">
    <location>
        <begin position="209"/>
        <end position="215"/>
    </location>
</feature>
<feature type="helix" evidence="22">
    <location>
        <begin position="219"/>
        <end position="228"/>
    </location>
</feature>
<feature type="helix" evidence="22">
    <location>
        <begin position="243"/>
        <end position="249"/>
    </location>
</feature>
<feature type="helix" evidence="22">
    <location>
        <begin position="253"/>
        <end position="261"/>
    </location>
</feature>
<feature type="helix" evidence="22">
    <location>
        <begin position="275"/>
        <end position="281"/>
    </location>
</feature>
<feature type="helix" evidence="22">
    <location>
        <begin position="285"/>
        <end position="293"/>
    </location>
</feature>
<feature type="helix" evidence="22">
    <location>
        <begin position="308"/>
        <end position="314"/>
    </location>
</feature>
<feature type="helix" evidence="22">
    <location>
        <begin position="318"/>
        <end position="329"/>
    </location>
</feature>
<accession>Q9ET47</accession>
<accession>A2AK06</accession>
<accession>A2AK09</accession>
<accession>A2AK13</accession>
<accession>B1AWP3</accession>
<accession>B1AWP6</accession>
<accession>B1AWQ2</accession>
<accession>Q6GYS0</accession>
<accession>Q6GYS1</accession>
<accession>Q80ZC0</accession>
<accession>Q80ZC1</accession>
<accession>Q80ZC2</accession>
<accession>Q80ZC3</accession>
<accession>Q9QY27</accession>
<organism>
    <name type="scientific">Mus musculus</name>
    <name type="common">Mouse</name>
    <dbReference type="NCBI Taxonomy" id="10090"/>
    <lineage>
        <taxon>Eukaryota</taxon>
        <taxon>Metazoa</taxon>
        <taxon>Chordata</taxon>
        <taxon>Craniata</taxon>
        <taxon>Vertebrata</taxon>
        <taxon>Euteleostomi</taxon>
        <taxon>Mammalia</taxon>
        <taxon>Eutheria</taxon>
        <taxon>Euarchontoglires</taxon>
        <taxon>Glires</taxon>
        <taxon>Rodentia</taxon>
        <taxon>Myomorpha</taxon>
        <taxon>Muroidea</taxon>
        <taxon>Muridae</taxon>
        <taxon>Murinae</taxon>
        <taxon>Mus</taxon>
        <taxon>Mus</taxon>
    </lineage>
</organism>
<keyword id="KW-0002">3D-structure</keyword>
<keyword id="KW-0009">Actin-binding</keyword>
<keyword id="KW-0025">Alternative splicing</keyword>
<keyword id="KW-0040">ANK repeat</keyword>
<keyword id="KW-0965">Cell junction</keyword>
<keyword id="KW-0966">Cell projection</keyword>
<keyword id="KW-0175">Coiled coil</keyword>
<keyword id="KW-0963">Cytoplasm</keyword>
<keyword id="KW-0206">Cytoskeleton</keyword>
<keyword id="KW-1009">Hearing</keyword>
<keyword id="KW-0597">Phosphoprotein</keyword>
<keyword id="KW-1185">Reference proteome</keyword>
<keyword id="KW-0677">Repeat</keyword>
<keyword id="KW-0770">Synapse</keyword>
<protein>
    <recommendedName>
        <fullName>Espin</fullName>
    </recommendedName>
    <alternativeName>
        <fullName>Ectoplasmic specialization protein</fullName>
    </alternativeName>
</protein>
<evidence type="ECO:0000250" key="1">
    <source>
        <dbReference type="UniProtKB" id="Q63618"/>
    </source>
</evidence>
<evidence type="ECO:0000255" key="2"/>
<evidence type="ECO:0000255" key="3">
    <source>
        <dbReference type="PROSITE-ProRule" id="PRU00406"/>
    </source>
</evidence>
<evidence type="ECO:0000256" key="4">
    <source>
        <dbReference type="SAM" id="MobiDB-lite"/>
    </source>
</evidence>
<evidence type="ECO:0000269" key="5">
    <source>
    </source>
</evidence>
<evidence type="ECO:0000269" key="6">
    <source>
    </source>
</evidence>
<evidence type="ECO:0000269" key="7">
    <source>
    </source>
</evidence>
<evidence type="ECO:0000269" key="8">
    <source>
    </source>
</evidence>
<evidence type="ECO:0000269" key="9">
    <source>
    </source>
</evidence>
<evidence type="ECO:0000269" key="10">
    <source>
    </source>
</evidence>
<evidence type="ECO:0000269" key="11">
    <source>
    </source>
</evidence>
<evidence type="ECO:0000269" key="12">
    <source>
    </source>
</evidence>
<evidence type="ECO:0000269" key="13">
    <source>
    </source>
</evidence>
<evidence type="ECO:0000269" key="14">
    <source>
    </source>
</evidence>
<evidence type="ECO:0000269" key="15">
    <source>
    </source>
</evidence>
<evidence type="ECO:0000269" key="16">
    <source>
    </source>
</evidence>
<evidence type="ECO:0000303" key="17">
    <source>
    </source>
</evidence>
<evidence type="ECO:0000303" key="18">
    <source>
    </source>
</evidence>
<evidence type="ECO:0000305" key="19"/>
<evidence type="ECO:0007744" key="20">
    <source>
    </source>
</evidence>
<evidence type="ECO:0007829" key="21">
    <source>
        <dbReference type="PDB" id="5ET0"/>
    </source>
</evidence>
<evidence type="ECO:0007829" key="22">
    <source>
        <dbReference type="PDB" id="5ET1"/>
    </source>
</evidence>
<gene>
    <name type="primary">Espn</name>
</gene>
<proteinExistence type="evidence at protein level"/>